<sequence length="319" mass="37048">MKKSITSLDLNLLLCLQLLMQERSVTKAAKRMNVTPSAVSKSLSKLRTWFDDPLFVNTPLGLTPTPLMVNMEQSLADWMQMSNQLLDKPHHESPRGLKFELAAESPLVMIMFNSLSQQIYQRYPQATIKVRNWDYDSLDAITRGEVDLGFTGRESHPRSRELLSLLPLSIDFEVLFSDLPWVWLREDHPALQEEWNLETFLRYPHISICWEQSDTWALDDVLQEMGRKRNIALSLPGFEQSLFMAAQPNHSLLATAPLYCQRYNQLHQLPLVARPLPFDAAQREKLMVPFTLLWHKRNSHNPKIIWLKETIKTLYSHLS</sequence>
<organism>
    <name type="scientific">Citrobacter koseri (strain ATCC BAA-895 / CDC 4225-83 / SGSC4696)</name>
    <dbReference type="NCBI Taxonomy" id="290338"/>
    <lineage>
        <taxon>Bacteria</taxon>
        <taxon>Pseudomonadati</taxon>
        <taxon>Pseudomonadota</taxon>
        <taxon>Gammaproteobacteria</taxon>
        <taxon>Enterobacterales</taxon>
        <taxon>Enterobacteriaceae</taxon>
        <taxon>Citrobacter</taxon>
    </lineage>
</organism>
<evidence type="ECO:0000255" key="1">
    <source>
        <dbReference type="HAMAP-Rule" id="MF_01607"/>
    </source>
</evidence>
<evidence type="ECO:0000305" key="2"/>
<keyword id="KW-0238">DNA-binding</keyword>
<keyword id="KW-1185">Reference proteome</keyword>
<keyword id="KW-0804">Transcription</keyword>
<keyword id="KW-0805">Transcription regulation</keyword>
<comment type="function">
    <text evidence="1">Involved in anaerobic NO protection.</text>
</comment>
<comment type="similarity">
    <text evidence="2">Belongs to the LysR transcriptional regulatory family.</text>
</comment>
<proteinExistence type="inferred from homology"/>
<accession>A8ACM1</accession>
<protein>
    <recommendedName>
        <fullName evidence="1">HTH-type transcriptional regulator YidZ</fullName>
    </recommendedName>
</protein>
<gene>
    <name evidence="1" type="primary">yidZ</name>
    <name type="ordered locus">CKO_00055</name>
</gene>
<reference key="1">
    <citation type="submission" date="2007-08" db="EMBL/GenBank/DDBJ databases">
        <authorList>
            <consortium name="The Citrobacter koseri Genome Sequencing Project"/>
            <person name="McClelland M."/>
            <person name="Sanderson E.K."/>
            <person name="Porwollik S."/>
            <person name="Spieth J."/>
            <person name="Clifton W.S."/>
            <person name="Latreille P."/>
            <person name="Courtney L."/>
            <person name="Wang C."/>
            <person name="Pepin K."/>
            <person name="Bhonagiri V."/>
            <person name="Nash W."/>
            <person name="Johnson M."/>
            <person name="Thiruvilangam P."/>
            <person name="Wilson R."/>
        </authorList>
    </citation>
    <scope>NUCLEOTIDE SEQUENCE [LARGE SCALE GENOMIC DNA]</scope>
    <source>
        <strain>ATCC BAA-895 / CDC 4225-83 / SGSC4696</strain>
    </source>
</reference>
<feature type="chain" id="PRO_0000323500" description="HTH-type transcriptional regulator YidZ">
    <location>
        <begin position="1"/>
        <end position="319"/>
    </location>
</feature>
<feature type="domain" description="HTH lysR-type" evidence="1">
    <location>
        <begin position="8"/>
        <end position="65"/>
    </location>
</feature>
<feature type="DNA-binding region" description="H-T-H motif" evidence="1">
    <location>
        <begin position="25"/>
        <end position="44"/>
    </location>
</feature>
<dbReference type="EMBL" id="CP000822">
    <property type="protein sequence ID" value="ABV11234.1"/>
    <property type="molecule type" value="Genomic_DNA"/>
</dbReference>
<dbReference type="RefSeq" id="WP_012000814.1">
    <property type="nucleotide sequence ID" value="NC_009792.1"/>
</dbReference>
<dbReference type="SMR" id="A8ACM1"/>
<dbReference type="STRING" id="290338.CKO_00055"/>
<dbReference type="GeneID" id="45134360"/>
<dbReference type="KEGG" id="cko:CKO_00055"/>
<dbReference type="HOGENOM" id="CLU_039613_39_2_6"/>
<dbReference type="OrthoDB" id="8893795at2"/>
<dbReference type="Proteomes" id="UP000008148">
    <property type="component" value="Chromosome"/>
</dbReference>
<dbReference type="GO" id="GO:0003677">
    <property type="term" value="F:DNA binding"/>
    <property type="evidence" value="ECO:0007669"/>
    <property type="project" value="UniProtKB-KW"/>
</dbReference>
<dbReference type="GO" id="GO:0003700">
    <property type="term" value="F:DNA-binding transcription factor activity"/>
    <property type="evidence" value="ECO:0007669"/>
    <property type="project" value="UniProtKB-UniRule"/>
</dbReference>
<dbReference type="CDD" id="cd08417">
    <property type="entry name" value="PBP2_Nitroaromatics_like"/>
    <property type="match status" value="1"/>
</dbReference>
<dbReference type="Gene3D" id="3.40.190.10">
    <property type="entry name" value="Periplasmic binding protein-like II"/>
    <property type="match status" value="2"/>
</dbReference>
<dbReference type="Gene3D" id="1.10.10.10">
    <property type="entry name" value="Winged helix-like DNA-binding domain superfamily/Winged helix DNA-binding domain"/>
    <property type="match status" value="1"/>
</dbReference>
<dbReference type="HAMAP" id="MF_01607">
    <property type="entry name" value="HTH_type_YidZ"/>
    <property type="match status" value="1"/>
</dbReference>
<dbReference type="InterPro" id="IPR050389">
    <property type="entry name" value="LysR-type_TF"/>
</dbReference>
<dbReference type="InterPro" id="IPR005119">
    <property type="entry name" value="LysR_subst-bd"/>
</dbReference>
<dbReference type="InterPro" id="IPR000847">
    <property type="entry name" value="Tscrpt_reg_HTH_LysR"/>
</dbReference>
<dbReference type="InterPro" id="IPR023746">
    <property type="entry name" value="Tscrpt_reg_YidZ"/>
</dbReference>
<dbReference type="InterPro" id="IPR036388">
    <property type="entry name" value="WH-like_DNA-bd_sf"/>
</dbReference>
<dbReference type="InterPro" id="IPR036390">
    <property type="entry name" value="WH_DNA-bd_sf"/>
</dbReference>
<dbReference type="InterPro" id="IPR037402">
    <property type="entry name" value="YidZ_PBP2"/>
</dbReference>
<dbReference type="NCBIfam" id="NF007581">
    <property type="entry name" value="PRK10216.1"/>
    <property type="match status" value="1"/>
</dbReference>
<dbReference type="PANTHER" id="PTHR30118">
    <property type="entry name" value="HTH-TYPE TRANSCRIPTIONAL REGULATOR LEUO-RELATED"/>
    <property type="match status" value="1"/>
</dbReference>
<dbReference type="PANTHER" id="PTHR30118:SF11">
    <property type="entry name" value="HTH-TYPE TRANSCRIPTIONAL REGULATOR YIDZ"/>
    <property type="match status" value="1"/>
</dbReference>
<dbReference type="Pfam" id="PF00126">
    <property type="entry name" value="HTH_1"/>
    <property type="match status" value="1"/>
</dbReference>
<dbReference type="Pfam" id="PF03466">
    <property type="entry name" value="LysR_substrate"/>
    <property type="match status" value="1"/>
</dbReference>
<dbReference type="SUPFAM" id="SSF53850">
    <property type="entry name" value="Periplasmic binding protein-like II"/>
    <property type="match status" value="1"/>
</dbReference>
<dbReference type="SUPFAM" id="SSF46785">
    <property type="entry name" value="Winged helix' DNA-binding domain"/>
    <property type="match status" value="1"/>
</dbReference>
<dbReference type="PROSITE" id="PS50931">
    <property type="entry name" value="HTH_LYSR"/>
    <property type="match status" value="1"/>
</dbReference>
<name>YIDZ_CITK8</name>